<comment type="function">
    <text evidence="1">Involved in the biosynthesis of isopentenyl diphosphate (IPP) and dimethylallyl diphosphate (DMAPP), two major building blocks of isoprenoid compounds. Catalyzes the conversion of 4-diphosphocytidyl-2-C-methyl-D-erythritol 2-phosphate (CDP-ME2P) to 2-C-methyl-D-erythritol 2,4-cyclodiphosphate (ME-CPP) with a corresponding release of cytidine 5-monophosphate (CMP).</text>
</comment>
<comment type="catalytic activity">
    <reaction evidence="1">
        <text>4-CDP-2-C-methyl-D-erythritol 2-phosphate = 2-C-methyl-D-erythritol 2,4-cyclic diphosphate + CMP</text>
        <dbReference type="Rhea" id="RHEA:23864"/>
        <dbReference type="ChEBI" id="CHEBI:57919"/>
        <dbReference type="ChEBI" id="CHEBI:58483"/>
        <dbReference type="ChEBI" id="CHEBI:60377"/>
        <dbReference type="EC" id="4.6.1.12"/>
    </reaction>
</comment>
<comment type="cofactor">
    <cofactor evidence="1">
        <name>a divalent metal cation</name>
        <dbReference type="ChEBI" id="CHEBI:60240"/>
    </cofactor>
    <text evidence="1">Binds 1 divalent metal cation per subunit.</text>
</comment>
<comment type="pathway">
    <text evidence="1">Isoprenoid biosynthesis; isopentenyl diphosphate biosynthesis via DXP pathway; isopentenyl diphosphate from 1-deoxy-D-xylulose 5-phosphate: step 4/6.</text>
</comment>
<comment type="subunit">
    <text evidence="1">Homotrimer.</text>
</comment>
<comment type="similarity">
    <text evidence="1">Belongs to the IspF family.</text>
</comment>
<accession>A1AJY3</accession>
<sequence length="158" mass="16789">MRIGHGYDVHKLVEGRKLIMGGVDIPWEKGLLGHSDADVLLHAIADAILGALGEGDIGKHFPDTDPAYKGADSLKLLEHVANLAIAKGYCLGNLDATIIAQRPKMAPHIPAMRENIARVLRSTVDRVNVKATTEEGLSFTGRGEGISAHAVVLMIGKG</sequence>
<reference key="1">
    <citation type="submission" date="2006-10" db="EMBL/GenBank/DDBJ databases">
        <title>Complete sequence of chromosome of Pelobacter propionicus DSM 2379.</title>
        <authorList>
            <consortium name="US DOE Joint Genome Institute"/>
            <person name="Copeland A."/>
            <person name="Lucas S."/>
            <person name="Lapidus A."/>
            <person name="Barry K."/>
            <person name="Detter J.C."/>
            <person name="Glavina del Rio T."/>
            <person name="Hammon N."/>
            <person name="Israni S."/>
            <person name="Dalin E."/>
            <person name="Tice H."/>
            <person name="Pitluck S."/>
            <person name="Saunders E."/>
            <person name="Brettin T."/>
            <person name="Bruce D."/>
            <person name="Han C."/>
            <person name="Tapia R."/>
            <person name="Schmutz J."/>
            <person name="Larimer F."/>
            <person name="Land M."/>
            <person name="Hauser L."/>
            <person name="Kyrpides N."/>
            <person name="Kim E."/>
            <person name="Lovley D."/>
            <person name="Richardson P."/>
        </authorList>
    </citation>
    <scope>NUCLEOTIDE SEQUENCE [LARGE SCALE GENOMIC DNA]</scope>
    <source>
        <strain>DSM 2379 / NBRC 103807 / OttBd1</strain>
    </source>
</reference>
<protein>
    <recommendedName>
        <fullName evidence="1">2-C-methyl-D-erythritol 2,4-cyclodiphosphate synthase</fullName>
        <shortName evidence="1">MECDP-synthase</shortName>
        <shortName evidence="1">MECPP-synthase</shortName>
        <shortName evidence="1">MECPS</shortName>
        <ecNumber evidence="1">4.6.1.12</ecNumber>
    </recommendedName>
</protein>
<keyword id="KW-0414">Isoprene biosynthesis</keyword>
<keyword id="KW-0456">Lyase</keyword>
<keyword id="KW-0479">Metal-binding</keyword>
<keyword id="KW-1185">Reference proteome</keyword>
<dbReference type="EC" id="4.6.1.12" evidence="1"/>
<dbReference type="EMBL" id="CP000482">
    <property type="protein sequence ID" value="ABK97653.1"/>
    <property type="molecule type" value="Genomic_DNA"/>
</dbReference>
<dbReference type="RefSeq" id="WP_011733968.1">
    <property type="nucleotide sequence ID" value="NC_008609.1"/>
</dbReference>
<dbReference type="SMR" id="A1AJY3"/>
<dbReference type="STRING" id="338966.Ppro_0012"/>
<dbReference type="KEGG" id="ppd:Ppro_0012"/>
<dbReference type="eggNOG" id="COG0245">
    <property type="taxonomic scope" value="Bacteria"/>
</dbReference>
<dbReference type="HOGENOM" id="CLU_084630_2_0_7"/>
<dbReference type="OrthoDB" id="9804336at2"/>
<dbReference type="UniPathway" id="UPA00056">
    <property type="reaction ID" value="UER00095"/>
</dbReference>
<dbReference type="Proteomes" id="UP000006732">
    <property type="component" value="Chromosome"/>
</dbReference>
<dbReference type="GO" id="GO:0008685">
    <property type="term" value="F:2-C-methyl-D-erythritol 2,4-cyclodiphosphate synthase activity"/>
    <property type="evidence" value="ECO:0007669"/>
    <property type="project" value="UniProtKB-UniRule"/>
</dbReference>
<dbReference type="GO" id="GO:0046872">
    <property type="term" value="F:metal ion binding"/>
    <property type="evidence" value="ECO:0007669"/>
    <property type="project" value="UniProtKB-KW"/>
</dbReference>
<dbReference type="GO" id="GO:0019288">
    <property type="term" value="P:isopentenyl diphosphate biosynthetic process, methylerythritol 4-phosphate pathway"/>
    <property type="evidence" value="ECO:0007669"/>
    <property type="project" value="UniProtKB-UniRule"/>
</dbReference>
<dbReference type="GO" id="GO:0016114">
    <property type="term" value="P:terpenoid biosynthetic process"/>
    <property type="evidence" value="ECO:0007669"/>
    <property type="project" value="InterPro"/>
</dbReference>
<dbReference type="CDD" id="cd00554">
    <property type="entry name" value="MECDP_synthase"/>
    <property type="match status" value="1"/>
</dbReference>
<dbReference type="FunFam" id="3.30.1330.50:FF:000001">
    <property type="entry name" value="2-C-methyl-D-erythritol 2,4-cyclodiphosphate synthase"/>
    <property type="match status" value="1"/>
</dbReference>
<dbReference type="Gene3D" id="3.30.1330.50">
    <property type="entry name" value="2-C-methyl-D-erythritol 2,4-cyclodiphosphate synthase"/>
    <property type="match status" value="1"/>
</dbReference>
<dbReference type="HAMAP" id="MF_00107">
    <property type="entry name" value="IspF"/>
    <property type="match status" value="1"/>
</dbReference>
<dbReference type="InterPro" id="IPR003526">
    <property type="entry name" value="MECDP_synthase"/>
</dbReference>
<dbReference type="InterPro" id="IPR020555">
    <property type="entry name" value="MECDP_synthase_CS"/>
</dbReference>
<dbReference type="InterPro" id="IPR036571">
    <property type="entry name" value="MECDP_synthase_sf"/>
</dbReference>
<dbReference type="NCBIfam" id="TIGR00151">
    <property type="entry name" value="ispF"/>
    <property type="match status" value="1"/>
</dbReference>
<dbReference type="PANTHER" id="PTHR43181">
    <property type="entry name" value="2-C-METHYL-D-ERYTHRITOL 2,4-CYCLODIPHOSPHATE SYNTHASE, CHLOROPLASTIC"/>
    <property type="match status" value="1"/>
</dbReference>
<dbReference type="PANTHER" id="PTHR43181:SF1">
    <property type="entry name" value="2-C-METHYL-D-ERYTHRITOL 2,4-CYCLODIPHOSPHATE SYNTHASE, CHLOROPLASTIC"/>
    <property type="match status" value="1"/>
</dbReference>
<dbReference type="Pfam" id="PF02542">
    <property type="entry name" value="YgbB"/>
    <property type="match status" value="1"/>
</dbReference>
<dbReference type="SUPFAM" id="SSF69765">
    <property type="entry name" value="IpsF-like"/>
    <property type="match status" value="1"/>
</dbReference>
<dbReference type="PROSITE" id="PS01350">
    <property type="entry name" value="ISPF"/>
    <property type="match status" value="1"/>
</dbReference>
<gene>
    <name evidence="1" type="primary">ispF</name>
    <name type="ordered locus">Ppro_0012</name>
</gene>
<name>ISPF_PELPD</name>
<evidence type="ECO:0000255" key="1">
    <source>
        <dbReference type="HAMAP-Rule" id="MF_00107"/>
    </source>
</evidence>
<proteinExistence type="inferred from homology"/>
<organism>
    <name type="scientific">Pelobacter propionicus (strain DSM 2379 / NBRC 103807 / OttBd1)</name>
    <dbReference type="NCBI Taxonomy" id="338966"/>
    <lineage>
        <taxon>Bacteria</taxon>
        <taxon>Pseudomonadati</taxon>
        <taxon>Thermodesulfobacteriota</taxon>
        <taxon>Desulfuromonadia</taxon>
        <taxon>Desulfuromonadales</taxon>
        <taxon>Desulfuromonadaceae</taxon>
        <taxon>Pelobacter</taxon>
    </lineage>
</organism>
<feature type="chain" id="PRO_1000057711" description="2-C-methyl-D-erythritol 2,4-cyclodiphosphate synthase">
    <location>
        <begin position="1"/>
        <end position="158"/>
    </location>
</feature>
<feature type="binding site" evidence="1">
    <location>
        <begin position="8"/>
        <end position="10"/>
    </location>
    <ligand>
        <name>4-CDP-2-C-methyl-D-erythritol 2-phosphate</name>
        <dbReference type="ChEBI" id="CHEBI:57919"/>
    </ligand>
</feature>
<feature type="binding site" evidence="1">
    <location>
        <position position="8"/>
    </location>
    <ligand>
        <name>a divalent metal cation</name>
        <dbReference type="ChEBI" id="CHEBI:60240"/>
    </ligand>
</feature>
<feature type="binding site" evidence="1">
    <location>
        <position position="10"/>
    </location>
    <ligand>
        <name>a divalent metal cation</name>
        <dbReference type="ChEBI" id="CHEBI:60240"/>
    </ligand>
</feature>
<feature type="binding site" evidence="1">
    <location>
        <begin position="34"/>
        <end position="35"/>
    </location>
    <ligand>
        <name>4-CDP-2-C-methyl-D-erythritol 2-phosphate</name>
        <dbReference type="ChEBI" id="CHEBI:57919"/>
    </ligand>
</feature>
<feature type="binding site" evidence="1">
    <location>
        <position position="42"/>
    </location>
    <ligand>
        <name>a divalent metal cation</name>
        <dbReference type="ChEBI" id="CHEBI:60240"/>
    </ligand>
</feature>
<feature type="binding site" evidence="1">
    <location>
        <begin position="56"/>
        <end position="58"/>
    </location>
    <ligand>
        <name>4-CDP-2-C-methyl-D-erythritol 2-phosphate</name>
        <dbReference type="ChEBI" id="CHEBI:57919"/>
    </ligand>
</feature>
<feature type="binding site" evidence="1">
    <location>
        <begin position="61"/>
        <end position="65"/>
    </location>
    <ligand>
        <name>4-CDP-2-C-methyl-D-erythritol 2-phosphate</name>
        <dbReference type="ChEBI" id="CHEBI:57919"/>
    </ligand>
</feature>
<feature type="binding site" evidence="1">
    <location>
        <begin position="100"/>
        <end position="106"/>
    </location>
    <ligand>
        <name>4-CDP-2-C-methyl-D-erythritol 2-phosphate</name>
        <dbReference type="ChEBI" id="CHEBI:57919"/>
    </ligand>
</feature>
<feature type="binding site" evidence="1">
    <location>
        <begin position="132"/>
        <end position="135"/>
    </location>
    <ligand>
        <name>4-CDP-2-C-methyl-D-erythritol 2-phosphate</name>
        <dbReference type="ChEBI" id="CHEBI:57919"/>
    </ligand>
</feature>
<feature type="binding site" evidence="1">
    <location>
        <position position="139"/>
    </location>
    <ligand>
        <name>4-CDP-2-C-methyl-D-erythritol 2-phosphate</name>
        <dbReference type="ChEBI" id="CHEBI:57919"/>
    </ligand>
</feature>
<feature type="binding site" evidence="1">
    <location>
        <position position="142"/>
    </location>
    <ligand>
        <name>4-CDP-2-C-methyl-D-erythritol 2-phosphate</name>
        <dbReference type="ChEBI" id="CHEBI:57919"/>
    </ligand>
</feature>
<feature type="site" description="Transition state stabilizer" evidence="1">
    <location>
        <position position="34"/>
    </location>
</feature>
<feature type="site" description="Transition state stabilizer" evidence="1">
    <location>
        <position position="133"/>
    </location>
</feature>